<keyword id="KW-0004">4Fe-4S</keyword>
<keyword id="KW-0028">Amino-acid biosynthesis</keyword>
<keyword id="KW-0100">Branched-chain amino acid biosynthesis</keyword>
<keyword id="KW-0408">Iron</keyword>
<keyword id="KW-0411">Iron-sulfur</keyword>
<keyword id="KW-0432">Leucine biosynthesis</keyword>
<keyword id="KW-0456">Lyase</keyword>
<keyword id="KW-0479">Metal-binding</keyword>
<keyword id="KW-1185">Reference proteome</keyword>
<organism>
    <name type="scientific">Salinispora tropica (strain ATCC BAA-916 / DSM 44818 / JCM 13857 / NBRC 105044 / CNB-440)</name>
    <dbReference type="NCBI Taxonomy" id="369723"/>
    <lineage>
        <taxon>Bacteria</taxon>
        <taxon>Bacillati</taxon>
        <taxon>Actinomycetota</taxon>
        <taxon>Actinomycetes</taxon>
        <taxon>Micromonosporales</taxon>
        <taxon>Micromonosporaceae</taxon>
        <taxon>Salinispora</taxon>
    </lineage>
</organism>
<sequence>MVGVTPEPRTLAEKVWASHVVRSADGEPDLLFIDLHLLHEVTSPQAFDGLRLAGRRVRRTDLTIATEDHNTPTGYADPSYQSRRGDLLTITDPTSRTQIETLRRNCAEFGVRLHPLGDENQGIVHVIGPQLGLTQPGMTIVCGDSHTATHGAFGALAFGIGTSEVEHVLATQTLPQARPRTMAVNVVGDLAPGVTAKDLVLALIAQVGTGGGRGHVVEYRGEAIRKLSMEGRMTIANMSIEWGAKAGLIAPDDTTFGYLRGRPNAPAGADWEAAVAYWRTLPTDAGATFDSEVTLDASQITPFVTWGTNPGQGASLDASVPNPEEFATEPERAAARRALEYMDLAVGTPLRELTVDVVFVGSCTNGRIEDLRAAADVLRGRRVAPGVRMLVVPGSAAVRENAEAEGLDKVFTEAGAEWRFAGCSMCLGMNPDTLRPGQRAASTSNRNFEGRQGRGGRTHLVSPPVAAATAVTGRLAAPADL</sequence>
<dbReference type="EC" id="4.2.1.33" evidence="1"/>
<dbReference type="EMBL" id="CP000667">
    <property type="protein sequence ID" value="ABP53728.1"/>
    <property type="molecule type" value="Genomic_DNA"/>
</dbReference>
<dbReference type="RefSeq" id="WP_011905160.1">
    <property type="nucleotide sequence ID" value="NC_009380.1"/>
</dbReference>
<dbReference type="SMR" id="A4X4C8"/>
<dbReference type="STRING" id="369723.Strop_1258"/>
<dbReference type="KEGG" id="stp:Strop_1258"/>
<dbReference type="PATRIC" id="fig|369723.5.peg.1281"/>
<dbReference type="eggNOG" id="COG0065">
    <property type="taxonomic scope" value="Bacteria"/>
</dbReference>
<dbReference type="HOGENOM" id="CLU_006714_3_4_11"/>
<dbReference type="UniPathway" id="UPA00048">
    <property type="reaction ID" value="UER00071"/>
</dbReference>
<dbReference type="Proteomes" id="UP000000235">
    <property type="component" value="Chromosome"/>
</dbReference>
<dbReference type="GO" id="GO:0003861">
    <property type="term" value="F:3-isopropylmalate dehydratase activity"/>
    <property type="evidence" value="ECO:0007669"/>
    <property type="project" value="UniProtKB-UniRule"/>
</dbReference>
<dbReference type="GO" id="GO:0051539">
    <property type="term" value="F:4 iron, 4 sulfur cluster binding"/>
    <property type="evidence" value="ECO:0007669"/>
    <property type="project" value="UniProtKB-KW"/>
</dbReference>
<dbReference type="GO" id="GO:0046872">
    <property type="term" value="F:metal ion binding"/>
    <property type="evidence" value="ECO:0007669"/>
    <property type="project" value="UniProtKB-KW"/>
</dbReference>
<dbReference type="GO" id="GO:0009098">
    <property type="term" value="P:L-leucine biosynthetic process"/>
    <property type="evidence" value="ECO:0007669"/>
    <property type="project" value="UniProtKB-UniRule"/>
</dbReference>
<dbReference type="CDD" id="cd01583">
    <property type="entry name" value="IPMI"/>
    <property type="match status" value="1"/>
</dbReference>
<dbReference type="FunFam" id="3.30.499.10:FF:000007">
    <property type="entry name" value="3-isopropylmalate dehydratase large subunit"/>
    <property type="match status" value="1"/>
</dbReference>
<dbReference type="Gene3D" id="3.30.499.10">
    <property type="entry name" value="Aconitase, domain 3"/>
    <property type="match status" value="2"/>
</dbReference>
<dbReference type="HAMAP" id="MF_01026">
    <property type="entry name" value="LeuC_type1"/>
    <property type="match status" value="1"/>
</dbReference>
<dbReference type="InterPro" id="IPR004430">
    <property type="entry name" value="3-IsopropMal_deHydase_lsu"/>
</dbReference>
<dbReference type="InterPro" id="IPR015931">
    <property type="entry name" value="Acnase/IPM_dHydase_lsu_aba_1/3"/>
</dbReference>
<dbReference type="InterPro" id="IPR001030">
    <property type="entry name" value="Acoase/IPM_deHydtase_lsu_aba"/>
</dbReference>
<dbReference type="InterPro" id="IPR018136">
    <property type="entry name" value="Aconitase_4Fe-4S_BS"/>
</dbReference>
<dbReference type="InterPro" id="IPR036008">
    <property type="entry name" value="Aconitase_4Fe-4S_dom"/>
</dbReference>
<dbReference type="InterPro" id="IPR050067">
    <property type="entry name" value="IPM_dehydratase_rel_enz"/>
</dbReference>
<dbReference type="InterPro" id="IPR033941">
    <property type="entry name" value="IPMI_cat"/>
</dbReference>
<dbReference type="NCBIfam" id="TIGR00170">
    <property type="entry name" value="leuC"/>
    <property type="match status" value="1"/>
</dbReference>
<dbReference type="NCBIfam" id="NF004016">
    <property type="entry name" value="PRK05478.1"/>
    <property type="match status" value="1"/>
</dbReference>
<dbReference type="NCBIfam" id="NF009116">
    <property type="entry name" value="PRK12466.1"/>
    <property type="match status" value="1"/>
</dbReference>
<dbReference type="PANTHER" id="PTHR43822:SF9">
    <property type="entry name" value="3-ISOPROPYLMALATE DEHYDRATASE"/>
    <property type="match status" value="1"/>
</dbReference>
<dbReference type="PANTHER" id="PTHR43822">
    <property type="entry name" value="HOMOACONITASE, MITOCHONDRIAL-RELATED"/>
    <property type="match status" value="1"/>
</dbReference>
<dbReference type="Pfam" id="PF00330">
    <property type="entry name" value="Aconitase"/>
    <property type="match status" value="1"/>
</dbReference>
<dbReference type="PRINTS" id="PR00415">
    <property type="entry name" value="ACONITASE"/>
</dbReference>
<dbReference type="SUPFAM" id="SSF53732">
    <property type="entry name" value="Aconitase iron-sulfur domain"/>
    <property type="match status" value="1"/>
</dbReference>
<dbReference type="PROSITE" id="PS00450">
    <property type="entry name" value="ACONITASE_1"/>
    <property type="match status" value="1"/>
</dbReference>
<dbReference type="PROSITE" id="PS01244">
    <property type="entry name" value="ACONITASE_2"/>
    <property type="match status" value="1"/>
</dbReference>
<comment type="function">
    <text evidence="1">Catalyzes the isomerization between 2-isopropylmalate and 3-isopropylmalate, via the formation of 2-isopropylmaleate.</text>
</comment>
<comment type="catalytic activity">
    <reaction evidence="1">
        <text>(2R,3S)-3-isopropylmalate = (2S)-2-isopropylmalate</text>
        <dbReference type="Rhea" id="RHEA:32287"/>
        <dbReference type="ChEBI" id="CHEBI:1178"/>
        <dbReference type="ChEBI" id="CHEBI:35121"/>
        <dbReference type="EC" id="4.2.1.33"/>
    </reaction>
</comment>
<comment type="cofactor">
    <cofactor evidence="1">
        <name>[4Fe-4S] cluster</name>
        <dbReference type="ChEBI" id="CHEBI:49883"/>
    </cofactor>
    <text evidence="1">Binds 1 [4Fe-4S] cluster per subunit.</text>
</comment>
<comment type="pathway">
    <text evidence="1">Amino-acid biosynthesis; L-leucine biosynthesis; L-leucine from 3-methyl-2-oxobutanoate: step 2/4.</text>
</comment>
<comment type="subunit">
    <text evidence="1">Heterodimer of LeuC and LeuD.</text>
</comment>
<comment type="similarity">
    <text evidence="1">Belongs to the aconitase/IPM isomerase family. LeuC type 1 subfamily.</text>
</comment>
<feature type="chain" id="PRO_1000084224" description="3-isopropylmalate dehydratase large subunit">
    <location>
        <begin position="1"/>
        <end position="481"/>
    </location>
</feature>
<feature type="region of interest" description="Disordered" evidence="2">
    <location>
        <begin position="434"/>
        <end position="465"/>
    </location>
</feature>
<feature type="binding site" evidence="1">
    <location>
        <position position="363"/>
    </location>
    <ligand>
        <name>[4Fe-4S] cluster</name>
        <dbReference type="ChEBI" id="CHEBI:49883"/>
    </ligand>
</feature>
<feature type="binding site" evidence="1">
    <location>
        <position position="423"/>
    </location>
    <ligand>
        <name>[4Fe-4S] cluster</name>
        <dbReference type="ChEBI" id="CHEBI:49883"/>
    </ligand>
</feature>
<feature type="binding site" evidence="1">
    <location>
        <position position="426"/>
    </location>
    <ligand>
        <name>[4Fe-4S] cluster</name>
        <dbReference type="ChEBI" id="CHEBI:49883"/>
    </ligand>
</feature>
<reference key="1">
    <citation type="journal article" date="2007" name="Proc. Natl. Acad. Sci. U.S.A.">
        <title>Genome sequencing reveals complex secondary metabolome in the marine actinomycete Salinispora tropica.</title>
        <authorList>
            <person name="Udwary D.W."/>
            <person name="Zeigler L."/>
            <person name="Asolkar R.N."/>
            <person name="Singan V."/>
            <person name="Lapidus A."/>
            <person name="Fenical W."/>
            <person name="Jensen P.R."/>
            <person name="Moore B.S."/>
        </authorList>
    </citation>
    <scope>NUCLEOTIDE SEQUENCE [LARGE SCALE GENOMIC DNA]</scope>
    <source>
        <strain>ATCC BAA-916 / DSM 44818 / JCM 13857 / NBRC 105044 / CNB-440</strain>
    </source>
</reference>
<protein>
    <recommendedName>
        <fullName evidence="1">3-isopropylmalate dehydratase large subunit</fullName>
        <ecNumber evidence="1">4.2.1.33</ecNumber>
    </recommendedName>
    <alternativeName>
        <fullName evidence="1">Alpha-IPM isomerase</fullName>
        <shortName evidence="1">IPMI</shortName>
    </alternativeName>
    <alternativeName>
        <fullName evidence="1">Isopropylmalate isomerase</fullName>
    </alternativeName>
</protein>
<evidence type="ECO:0000255" key="1">
    <source>
        <dbReference type="HAMAP-Rule" id="MF_01026"/>
    </source>
</evidence>
<evidence type="ECO:0000256" key="2">
    <source>
        <dbReference type="SAM" id="MobiDB-lite"/>
    </source>
</evidence>
<name>LEUC_SALTO</name>
<gene>
    <name evidence="1" type="primary">leuC</name>
    <name type="ordered locus">Strop_1258</name>
</gene>
<accession>A4X4C8</accession>
<proteinExistence type="inferred from homology"/>